<proteinExistence type="inferred from homology"/>
<protein>
    <recommendedName>
        <fullName evidence="1">DNA-directed RNA polymerase subunit omega</fullName>
        <shortName evidence="1">RNAP omega subunit</shortName>
        <ecNumber evidence="1">2.7.7.6</ecNumber>
    </recommendedName>
    <alternativeName>
        <fullName evidence="1">RNA polymerase omega subunit</fullName>
    </alternativeName>
    <alternativeName>
        <fullName evidence="1">Transcriptase subunit omega</fullName>
    </alternativeName>
</protein>
<feature type="chain" id="PRO_0000237447" description="DNA-directed RNA polymerase subunit omega">
    <location>
        <begin position="1"/>
        <end position="74"/>
    </location>
</feature>
<organism>
    <name type="scientific">Campylobacter jejuni (strain RM1221)</name>
    <dbReference type="NCBI Taxonomy" id="195099"/>
    <lineage>
        <taxon>Bacteria</taxon>
        <taxon>Pseudomonadati</taxon>
        <taxon>Campylobacterota</taxon>
        <taxon>Epsilonproteobacteria</taxon>
        <taxon>Campylobacterales</taxon>
        <taxon>Campylobacteraceae</taxon>
        <taxon>Campylobacter</taxon>
    </lineage>
</organism>
<comment type="function">
    <text evidence="1">Promotes RNA polymerase assembly. Latches the N- and C-terminal regions of the beta' subunit thereby facilitating its interaction with the beta and alpha subunits.</text>
</comment>
<comment type="catalytic activity">
    <reaction evidence="1">
        <text>RNA(n) + a ribonucleoside 5'-triphosphate = RNA(n+1) + diphosphate</text>
        <dbReference type="Rhea" id="RHEA:21248"/>
        <dbReference type="Rhea" id="RHEA-COMP:14527"/>
        <dbReference type="Rhea" id="RHEA-COMP:17342"/>
        <dbReference type="ChEBI" id="CHEBI:33019"/>
        <dbReference type="ChEBI" id="CHEBI:61557"/>
        <dbReference type="ChEBI" id="CHEBI:140395"/>
        <dbReference type="EC" id="2.7.7.6"/>
    </reaction>
</comment>
<comment type="subunit">
    <text evidence="1">The RNAP catalytic core consists of 2 alpha, 1 beta, 1 beta' and 1 omega subunit. When a sigma factor is associated with the core the holoenzyme is formed, which can initiate transcription.</text>
</comment>
<comment type="similarity">
    <text evidence="1">Belongs to the RNA polymerase subunit omega family.</text>
</comment>
<evidence type="ECO:0000255" key="1">
    <source>
        <dbReference type="HAMAP-Rule" id="MF_00366"/>
    </source>
</evidence>
<dbReference type="EC" id="2.7.7.6" evidence="1"/>
<dbReference type="EMBL" id="CP000025">
    <property type="protein sequence ID" value="AAW35728.1"/>
    <property type="molecule type" value="Genomic_DNA"/>
</dbReference>
<dbReference type="RefSeq" id="WP_002853464.1">
    <property type="nucleotide sequence ID" value="NC_003912.7"/>
</dbReference>
<dbReference type="SMR" id="Q5HTJ0"/>
<dbReference type="KEGG" id="cjr:CJE1409"/>
<dbReference type="HOGENOM" id="CLU_125406_3_0_7"/>
<dbReference type="GO" id="GO:0000428">
    <property type="term" value="C:DNA-directed RNA polymerase complex"/>
    <property type="evidence" value="ECO:0007669"/>
    <property type="project" value="UniProtKB-KW"/>
</dbReference>
<dbReference type="GO" id="GO:0003677">
    <property type="term" value="F:DNA binding"/>
    <property type="evidence" value="ECO:0007669"/>
    <property type="project" value="UniProtKB-UniRule"/>
</dbReference>
<dbReference type="GO" id="GO:0003899">
    <property type="term" value="F:DNA-directed RNA polymerase activity"/>
    <property type="evidence" value="ECO:0007669"/>
    <property type="project" value="UniProtKB-UniRule"/>
</dbReference>
<dbReference type="GO" id="GO:0006351">
    <property type="term" value="P:DNA-templated transcription"/>
    <property type="evidence" value="ECO:0007669"/>
    <property type="project" value="UniProtKB-UniRule"/>
</dbReference>
<dbReference type="Gene3D" id="3.90.940.10">
    <property type="match status" value="1"/>
</dbReference>
<dbReference type="HAMAP" id="MF_00366">
    <property type="entry name" value="RNApol_bact_RpoZ"/>
    <property type="match status" value="1"/>
</dbReference>
<dbReference type="InterPro" id="IPR003716">
    <property type="entry name" value="DNA-dir_RNA_pol_omega"/>
</dbReference>
<dbReference type="InterPro" id="IPR006110">
    <property type="entry name" value="Pol_omega/Rpo6/RPB6"/>
</dbReference>
<dbReference type="InterPro" id="IPR036161">
    <property type="entry name" value="RPB6/omega-like_sf"/>
</dbReference>
<dbReference type="NCBIfam" id="NF001579">
    <property type="entry name" value="PRK00392.6-2"/>
    <property type="match status" value="1"/>
</dbReference>
<dbReference type="NCBIfam" id="TIGR00690">
    <property type="entry name" value="rpoZ"/>
    <property type="match status" value="1"/>
</dbReference>
<dbReference type="Pfam" id="PF01192">
    <property type="entry name" value="RNA_pol_Rpb6"/>
    <property type="match status" value="1"/>
</dbReference>
<dbReference type="SMART" id="SM01409">
    <property type="entry name" value="RNA_pol_Rpb6"/>
    <property type="match status" value="1"/>
</dbReference>
<dbReference type="SUPFAM" id="SSF63562">
    <property type="entry name" value="RPB6/omega subunit-like"/>
    <property type="match status" value="1"/>
</dbReference>
<name>RPOZ_CAMJR</name>
<sequence length="74" mass="8318">MDKRIEEVAAKALEKMGNDRYRLSLVVAKRAEQLANGATPLVDFDKNKNKLADIALYEIAENKITLEGLVETNR</sequence>
<gene>
    <name evidence="1" type="primary">rpoZ</name>
    <name type="ordered locus">CJE1409</name>
</gene>
<reference key="1">
    <citation type="journal article" date="2005" name="PLoS Biol.">
        <title>Major structural differences and novel potential virulence mechanisms from the genomes of multiple Campylobacter species.</title>
        <authorList>
            <person name="Fouts D.E."/>
            <person name="Mongodin E.F."/>
            <person name="Mandrell R.E."/>
            <person name="Miller W.G."/>
            <person name="Rasko D.A."/>
            <person name="Ravel J."/>
            <person name="Brinkac L.M."/>
            <person name="DeBoy R.T."/>
            <person name="Parker C.T."/>
            <person name="Daugherty S.C."/>
            <person name="Dodson R.J."/>
            <person name="Durkin A.S."/>
            <person name="Madupu R."/>
            <person name="Sullivan S.A."/>
            <person name="Shetty J.U."/>
            <person name="Ayodeji M.A."/>
            <person name="Shvartsbeyn A."/>
            <person name="Schatz M.C."/>
            <person name="Badger J.H."/>
            <person name="Fraser C.M."/>
            <person name="Nelson K.E."/>
        </authorList>
    </citation>
    <scope>NUCLEOTIDE SEQUENCE [LARGE SCALE GENOMIC DNA]</scope>
    <source>
        <strain>RM1221</strain>
    </source>
</reference>
<keyword id="KW-0240">DNA-directed RNA polymerase</keyword>
<keyword id="KW-0548">Nucleotidyltransferase</keyword>
<keyword id="KW-0804">Transcription</keyword>
<keyword id="KW-0808">Transferase</keyword>
<accession>Q5HTJ0</accession>